<protein>
    <recommendedName>
        <fullName evidence="1">Phosphoribosylaminoimidazole-succinocarboxamide synthase</fullName>
        <ecNumber evidence="1">6.3.2.6</ecNumber>
    </recommendedName>
    <alternativeName>
        <fullName evidence="1">SAICAR synthetase</fullName>
    </alternativeName>
</protein>
<proteinExistence type="inferred from homology"/>
<name>PUR7_DESAL</name>
<organism>
    <name type="scientific">Desulfatibacillum aliphaticivorans</name>
    <dbReference type="NCBI Taxonomy" id="218208"/>
    <lineage>
        <taxon>Bacteria</taxon>
        <taxon>Pseudomonadati</taxon>
        <taxon>Thermodesulfobacteriota</taxon>
        <taxon>Desulfobacteria</taxon>
        <taxon>Desulfobacterales</taxon>
        <taxon>Desulfatibacillaceae</taxon>
        <taxon>Desulfatibacillum</taxon>
    </lineage>
</organism>
<feature type="chain" id="PRO_1000117830" description="Phosphoribosylaminoimidazole-succinocarboxamide synthase">
    <location>
        <begin position="1"/>
        <end position="299"/>
    </location>
</feature>
<dbReference type="EC" id="6.3.2.6" evidence="1"/>
<dbReference type="EMBL" id="CP001322">
    <property type="protein sequence ID" value="ACL02617.1"/>
    <property type="molecule type" value="Genomic_DNA"/>
</dbReference>
<dbReference type="RefSeq" id="WP_012610055.1">
    <property type="nucleotide sequence ID" value="NC_011768.1"/>
</dbReference>
<dbReference type="SMR" id="B8FI50"/>
<dbReference type="KEGG" id="dal:Dalk_0912"/>
<dbReference type="eggNOG" id="COG0152">
    <property type="taxonomic scope" value="Bacteria"/>
</dbReference>
<dbReference type="HOGENOM" id="CLU_045637_0_0_7"/>
<dbReference type="UniPathway" id="UPA00074">
    <property type="reaction ID" value="UER00131"/>
</dbReference>
<dbReference type="Proteomes" id="UP000000739">
    <property type="component" value="Chromosome"/>
</dbReference>
<dbReference type="GO" id="GO:0005737">
    <property type="term" value="C:cytoplasm"/>
    <property type="evidence" value="ECO:0007669"/>
    <property type="project" value="TreeGrafter"/>
</dbReference>
<dbReference type="GO" id="GO:0005524">
    <property type="term" value="F:ATP binding"/>
    <property type="evidence" value="ECO:0007669"/>
    <property type="project" value="UniProtKB-KW"/>
</dbReference>
<dbReference type="GO" id="GO:0004639">
    <property type="term" value="F:phosphoribosylaminoimidazolesuccinocarboxamide synthase activity"/>
    <property type="evidence" value="ECO:0007669"/>
    <property type="project" value="UniProtKB-UniRule"/>
</dbReference>
<dbReference type="GO" id="GO:0006189">
    <property type="term" value="P:'de novo' IMP biosynthetic process"/>
    <property type="evidence" value="ECO:0007669"/>
    <property type="project" value="UniProtKB-UniRule"/>
</dbReference>
<dbReference type="CDD" id="cd01414">
    <property type="entry name" value="SAICAR_synt_Sc"/>
    <property type="match status" value="1"/>
</dbReference>
<dbReference type="FunFam" id="3.30.470.20:FF:000015">
    <property type="entry name" value="Phosphoribosylaminoimidazole-succinocarboxamide synthase"/>
    <property type="match status" value="1"/>
</dbReference>
<dbReference type="Gene3D" id="3.30.470.20">
    <property type="entry name" value="ATP-grasp fold, B domain"/>
    <property type="match status" value="1"/>
</dbReference>
<dbReference type="Gene3D" id="3.30.200.20">
    <property type="entry name" value="Phosphorylase Kinase, domain 1"/>
    <property type="match status" value="1"/>
</dbReference>
<dbReference type="HAMAP" id="MF_00137">
    <property type="entry name" value="SAICAR_synth"/>
    <property type="match status" value="1"/>
</dbReference>
<dbReference type="InterPro" id="IPR028923">
    <property type="entry name" value="SAICAR_synt/ADE2_N"/>
</dbReference>
<dbReference type="InterPro" id="IPR001636">
    <property type="entry name" value="SAICAR_synth"/>
</dbReference>
<dbReference type="InterPro" id="IPR018236">
    <property type="entry name" value="SAICAR_synthetase_CS"/>
</dbReference>
<dbReference type="NCBIfam" id="NF010568">
    <property type="entry name" value="PRK13961.1"/>
    <property type="match status" value="1"/>
</dbReference>
<dbReference type="NCBIfam" id="TIGR00081">
    <property type="entry name" value="purC"/>
    <property type="match status" value="1"/>
</dbReference>
<dbReference type="PANTHER" id="PTHR43700">
    <property type="entry name" value="PHOSPHORIBOSYLAMINOIMIDAZOLE-SUCCINOCARBOXAMIDE SYNTHASE"/>
    <property type="match status" value="1"/>
</dbReference>
<dbReference type="PANTHER" id="PTHR43700:SF1">
    <property type="entry name" value="PHOSPHORIBOSYLAMINOIMIDAZOLE-SUCCINOCARBOXAMIDE SYNTHASE"/>
    <property type="match status" value="1"/>
</dbReference>
<dbReference type="Pfam" id="PF01259">
    <property type="entry name" value="SAICAR_synt"/>
    <property type="match status" value="1"/>
</dbReference>
<dbReference type="SUPFAM" id="SSF56104">
    <property type="entry name" value="SAICAR synthase-like"/>
    <property type="match status" value="1"/>
</dbReference>
<dbReference type="PROSITE" id="PS01058">
    <property type="entry name" value="SAICAR_SYNTHETASE_2"/>
    <property type="match status" value="1"/>
</dbReference>
<sequence length="299" mass="33599">MASSVWQTELPDLPEPKRGKVRDMYDLGDAYLMVATDRLSAFDVIMPDPIPDKGKVLTQISLFWFDVMKDIVDNHVLTAKVDEFPVKCRQYADILEGRSILVKKVQPQAIECVVRGYISGSGWSSYKKSQSVCGISLPEGLKESEKLPKTLFTPSTKAELGEHDENISFEKAAEIVGPETAEKLRDLSLAIYTKGADLANEKGIIIADTKFEFGTTDDGRIILIDEVLTPDSSRFWPKDQYEPGRAQDSFDKQFVRDYLLEIKFNKQPPGPKLPQEVLDKTRDKYLQALKLLAGDAYSI</sequence>
<evidence type="ECO:0000255" key="1">
    <source>
        <dbReference type="HAMAP-Rule" id="MF_00137"/>
    </source>
</evidence>
<comment type="catalytic activity">
    <reaction evidence="1">
        <text>5-amino-1-(5-phospho-D-ribosyl)imidazole-4-carboxylate + L-aspartate + ATP = (2S)-2-[5-amino-1-(5-phospho-beta-D-ribosyl)imidazole-4-carboxamido]succinate + ADP + phosphate + 2 H(+)</text>
        <dbReference type="Rhea" id="RHEA:22628"/>
        <dbReference type="ChEBI" id="CHEBI:15378"/>
        <dbReference type="ChEBI" id="CHEBI:29991"/>
        <dbReference type="ChEBI" id="CHEBI:30616"/>
        <dbReference type="ChEBI" id="CHEBI:43474"/>
        <dbReference type="ChEBI" id="CHEBI:58443"/>
        <dbReference type="ChEBI" id="CHEBI:77657"/>
        <dbReference type="ChEBI" id="CHEBI:456216"/>
        <dbReference type="EC" id="6.3.2.6"/>
    </reaction>
</comment>
<comment type="pathway">
    <text evidence="1">Purine metabolism; IMP biosynthesis via de novo pathway; 5-amino-1-(5-phospho-D-ribosyl)imidazole-4-carboxamide from 5-amino-1-(5-phospho-D-ribosyl)imidazole-4-carboxylate: step 1/2.</text>
</comment>
<comment type="similarity">
    <text evidence="1">Belongs to the SAICAR synthetase family.</text>
</comment>
<accession>B8FI50</accession>
<reference key="1">
    <citation type="journal article" date="2012" name="Environ. Microbiol.">
        <title>The genome sequence of Desulfatibacillum alkenivorans AK-01: a blueprint for anaerobic alkane oxidation.</title>
        <authorList>
            <person name="Callaghan A.V."/>
            <person name="Morris B.E."/>
            <person name="Pereira I.A."/>
            <person name="McInerney M.J."/>
            <person name="Austin R.N."/>
            <person name="Groves J.T."/>
            <person name="Kukor J.J."/>
            <person name="Suflita J.M."/>
            <person name="Young L.Y."/>
            <person name="Zylstra G.J."/>
            <person name="Wawrik B."/>
        </authorList>
    </citation>
    <scope>NUCLEOTIDE SEQUENCE [LARGE SCALE GENOMIC DNA]</scope>
    <source>
        <strain>AK-01</strain>
    </source>
</reference>
<keyword id="KW-0067">ATP-binding</keyword>
<keyword id="KW-0436">Ligase</keyword>
<keyword id="KW-0547">Nucleotide-binding</keyword>
<keyword id="KW-0658">Purine biosynthesis</keyword>
<keyword id="KW-1185">Reference proteome</keyword>
<gene>
    <name evidence="1" type="primary">purC</name>
    <name type="ordered locus">Dalk_0912</name>
</gene>